<gene>
    <name type="primary">ND3</name>
    <name type="synonym">NAD3</name>
</gene>
<organism>
    <name type="scientific">Raphanus sativus</name>
    <name type="common">Radish</name>
    <name type="synonym">Raphanus raphanistrum var. sativus</name>
    <dbReference type="NCBI Taxonomy" id="3726"/>
    <lineage>
        <taxon>Eukaryota</taxon>
        <taxon>Viridiplantae</taxon>
        <taxon>Streptophyta</taxon>
        <taxon>Embryophyta</taxon>
        <taxon>Tracheophyta</taxon>
        <taxon>Spermatophyta</taxon>
        <taxon>Magnoliopsida</taxon>
        <taxon>eudicotyledons</taxon>
        <taxon>Gunneridae</taxon>
        <taxon>Pentapetalae</taxon>
        <taxon>rosids</taxon>
        <taxon>malvids</taxon>
        <taxon>Brassicales</taxon>
        <taxon>Brassicaceae</taxon>
        <taxon>Brassiceae</taxon>
        <taxon>Raphanus</taxon>
    </lineage>
</organism>
<protein>
    <recommendedName>
        <fullName>NADH-ubiquinone oxidoreductase chain 3</fullName>
        <ecNumber>7.1.1.2</ecNumber>
    </recommendedName>
    <alternativeName>
        <fullName>NADH dehydrogenase subunit 3</fullName>
    </alternativeName>
</protein>
<reference key="1">
    <citation type="journal article" date="1996" name="Curr. Genet.">
        <title>Characterization of the radish mitochondrial nad3/rps12 locus: analysis of recombination repeats and RNA editing.</title>
        <authorList>
            <person name="Rankin C.T."/>
            <person name="Cutright M.T."/>
            <person name="Makaroff C.A."/>
        </authorList>
    </citation>
    <scope>NUCLEOTIDE SEQUENCE [GENOMIC DNA]</scope>
    <source>
        <strain>cv. CRGC15</strain>
        <strain>cv. Scarlet Knight</strain>
    </source>
</reference>
<name>NU3M_RAPSA</name>
<keyword id="KW-0249">Electron transport</keyword>
<keyword id="KW-0472">Membrane</keyword>
<keyword id="KW-0496">Mitochondrion</keyword>
<keyword id="KW-0520">NAD</keyword>
<keyword id="KW-1185">Reference proteome</keyword>
<keyword id="KW-0679">Respiratory chain</keyword>
<keyword id="KW-0691">RNA editing</keyword>
<keyword id="KW-1278">Translocase</keyword>
<keyword id="KW-0812">Transmembrane</keyword>
<keyword id="KW-1133">Transmembrane helix</keyword>
<keyword id="KW-0813">Transport</keyword>
<keyword id="KW-0830">Ubiquinone</keyword>
<accession>P68159</accession>
<accession>P48908</accession>
<feature type="chain" id="PRO_0000117817" description="NADH-ubiquinone oxidoreductase chain 3">
    <location>
        <begin position="1"/>
        <end position="119"/>
    </location>
</feature>
<feature type="transmembrane region" description="Helical" evidence="2">
    <location>
        <begin position="8"/>
        <end position="28"/>
    </location>
</feature>
<feature type="transmembrane region" description="Helical" evidence="2">
    <location>
        <begin position="63"/>
        <end position="83"/>
    </location>
</feature>
<feature type="transmembrane region" description="Helical" evidence="2">
    <location>
        <begin position="88"/>
        <end position="108"/>
    </location>
</feature>
<geneLocation type="mitochondrion"/>
<proteinExistence type="inferred from homology"/>
<comment type="function">
    <text evidence="1">Core subunit of the mitochondrial membrane respiratory chain NADH dehydrogenase (Complex I) that is believed to belong to the minimal assembly required for catalysis. Complex I functions in the transfer of electrons from NADH to the respiratory chain. The immediate electron acceptor for the enzyme is believed to be ubiquinone (By similarity).</text>
</comment>
<comment type="catalytic activity">
    <reaction>
        <text>a ubiquinone + NADH + 5 H(+)(in) = a ubiquinol + NAD(+) + 4 H(+)(out)</text>
        <dbReference type="Rhea" id="RHEA:29091"/>
        <dbReference type="Rhea" id="RHEA-COMP:9565"/>
        <dbReference type="Rhea" id="RHEA-COMP:9566"/>
        <dbReference type="ChEBI" id="CHEBI:15378"/>
        <dbReference type="ChEBI" id="CHEBI:16389"/>
        <dbReference type="ChEBI" id="CHEBI:17976"/>
        <dbReference type="ChEBI" id="CHEBI:57540"/>
        <dbReference type="ChEBI" id="CHEBI:57945"/>
        <dbReference type="EC" id="7.1.1.2"/>
    </reaction>
</comment>
<comment type="subcellular location">
    <subcellularLocation>
        <location evidence="1">Mitochondrion membrane</location>
        <topology evidence="1">Multi-pass membrane protein</topology>
    </subcellularLocation>
</comment>
<comment type="RNA editing">
    <location>
        <position position="3" evidence="1"/>
    </location>
    <location>
        <position position="9" evidence="1"/>
    </location>
    <location>
        <position position="28" evidence="1"/>
    </location>
    <location>
        <position position="50" evidence="1"/>
    </location>
    <location>
        <position position="71" evidence="1"/>
    </location>
    <location>
        <position position="84" evidence="1"/>
    </location>
    <location>
        <position position="85" evidence="1"/>
    </location>
    <location>
        <position position="116" evidence="1"/>
    </location>
    <location>
        <position position="118" evidence="1"/>
    </location>
</comment>
<comment type="similarity">
    <text evidence="3">Belongs to the complex I subunit 3 family.</text>
</comment>
<comment type="sequence caution" evidence="3">
    <conflict type="erroneous initiation">
        <sequence resource="EMBL-CDS" id="AAB18648"/>
    </conflict>
</comment>
<comment type="sequence caution" evidence="3">
    <conflict type="erroneous initiation">
        <sequence resource="EMBL-CDS" id="AAB18650"/>
    </conflict>
</comment>
<dbReference type="EC" id="7.1.1.2"/>
<dbReference type="EMBL" id="U43506">
    <property type="protein sequence ID" value="AAB18648.1"/>
    <property type="status" value="ALT_INIT"/>
    <property type="molecule type" value="Genomic_DNA"/>
</dbReference>
<dbReference type="EMBL" id="U43507">
    <property type="protein sequence ID" value="AAB18650.1"/>
    <property type="status" value="ALT_INIT"/>
    <property type="molecule type" value="Genomic_DNA"/>
</dbReference>
<dbReference type="PIR" id="S70000">
    <property type="entry name" value="S70000"/>
</dbReference>
<dbReference type="RefSeq" id="YP_006665996.1">
    <property type="nucleotide sequence ID" value="NC_018551.1"/>
</dbReference>
<dbReference type="SMR" id="P68159"/>
<dbReference type="GeneID" id="13630152"/>
<dbReference type="KEGG" id="rsz:13630152"/>
<dbReference type="OrthoDB" id="154075at2759"/>
<dbReference type="Proteomes" id="UP000504610">
    <property type="component" value="Mitochondrion MT"/>
</dbReference>
<dbReference type="GO" id="GO:0031966">
    <property type="term" value="C:mitochondrial membrane"/>
    <property type="evidence" value="ECO:0007669"/>
    <property type="project" value="UniProtKB-SubCell"/>
</dbReference>
<dbReference type="GO" id="GO:0030964">
    <property type="term" value="C:NADH dehydrogenase complex"/>
    <property type="evidence" value="ECO:0007669"/>
    <property type="project" value="TreeGrafter"/>
</dbReference>
<dbReference type="GO" id="GO:0008137">
    <property type="term" value="F:NADH dehydrogenase (ubiquinone) activity"/>
    <property type="evidence" value="ECO:0007669"/>
    <property type="project" value="UniProtKB-EC"/>
</dbReference>
<dbReference type="FunFam" id="1.20.58.1610:FF:000006">
    <property type="entry name" value="NADH-ubiquinone oxidoreductase chain 3"/>
    <property type="match status" value="1"/>
</dbReference>
<dbReference type="Gene3D" id="1.20.58.1610">
    <property type="entry name" value="NADH:ubiquinone/plastoquinone oxidoreductase, chain 3"/>
    <property type="match status" value="1"/>
</dbReference>
<dbReference type="HAMAP" id="MF_01394">
    <property type="entry name" value="NDH1_NuoA"/>
    <property type="match status" value="1"/>
</dbReference>
<dbReference type="InterPro" id="IPR023043">
    <property type="entry name" value="NAD(P)H_OxRDtase_bac/plastid"/>
</dbReference>
<dbReference type="InterPro" id="IPR000440">
    <property type="entry name" value="NADH_UbQ/plastoQ_OxRdtase_su3"/>
</dbReference>
<dbReference type="InterPro" id="IPR038430">
    <property type="entry name" value="NDAH_ubi_oxred_su3_sf"/>
</dbReference>
<dbReference type="PANTHER" id="PTHR11058">
    <property type="entry name" value="NADH-UBIQUINONE OXIDOREDUCTASE CHAIN 3"/>
    <property type="match status" value="1"/>
</dbReference>
<dbReference type="PANTHER" id="PTHR11058:SF9">
    <property type="entry name" value="NADH-UBIQUINONE OXIDOREDUCTASE CHAIN 3"/>
    <property type="match status" value="1"/>
</dbReference>
<dbReference type="Pfam" id="PF00507">
    <property type="entry name" value="Oxidored_q4"/>
    <property type="match status" value="1"/>
</dbReference>
<evidence type="ECO:0000250" key="1"/>
<evidence type="ECO:0000255" key="2"/>
<evidence type="ECO:0000305" key="3"/>
<sequence>MMLEFAPIFIYLVISLLVSLILLGVPFLFASNSSTYPEKLSAYECGFDPFGDARSRFDIRFYLVSILFLIFDLEVTFFFPWAVSLNKIDLFGFWSMMAFLFILTIGFLYEWKRGALDWE</sequence>